<evidence type="ECO:0000255" key="1">
    <source>
        <dbReference type="HAMAP-Rule" id="MF_01872"/>
    </source>
</evidence>
<reference key="1">
    <citation type="journal article" date="2010" name="PLoS Genet.">
        <title>Genome sequence of the plant growth promoting endophytic bacterium Enterobacter sp. 638.</title>
        <authorList>
            <person name="Taghavi S."/>
            <person name="van der Lelie D."/>
            <person name="Hoffman A."/>
            <person name="Zhang Y.B."/>
            <person name="Walla M.D."/>
            <person name="Vangronsveld J."/>
            <person name="Newman L."/>
            <person name="Monchy S."/>
        </authorList>
    </citation>
    <scope>NUCLEOTIDE SEQUENCE [LARGE SCALE GENOMIC DNA]</scope>
    <source>
        <strain>638</strain>
    </source>
</reference>
<sequence>MSQPKALLRRDGFTFKQFFVAHDRCAMKVGTDGILLGAWAPVAGVKRILDIGSGSGLLALMLAQRTEQHVTIDSVELDAQAANQASENAAESPWAERVQVQCADILAWAPEQTARYDLIVSNPPYYEPGVDCGTPEREQARYTGSLGHPALLAAAANLISEEGFFCVVLPENTGNTFIKTALDIGWFLRLRTDIADTDGKLPHRVLLALSPKEGECFSDRMVIRGPDQRYSEDYTALTQAFYLFM</sequence>
<dbReference type="EC" id="2.1.1.223" evidence="1"/>
<dbReference type="EMBL" id="CP000653">
    <property type="protein sequence ID" value="ABP61726.1"/>
    <property type="molecule type" value="Genomic_DNA"/>
</dbReference>
<dbReference type="RefSeq" id="WP_015960056.1">
    <property type="nucleotide sequence ID" value="NC_009436.1"/>
</dbReference>
<dbReference type="SMR" id="A4WDE6"/>
<dbReference type="STRING" id="399742.Ent638_3062"/>
<dbReference type="KEGG" id="ent:Ent638_3062"/>
<dbReference type="eggNOG" id="COG4123">
    <property type="taxonomic scope" value="Bacteria"/>
</dbReference>
<dbReference type="HOGENOM" id="CLU_061983_0_0_6"/>
<dbReference type="OrthoDB" id="5383291at2"/>
<dbReference type="Proteomes" id="UP000000230">
    <property type="component" value="Chromosome"/>
</dbReference>
<dbReference type="GO" id="GO:0005737">
    <property type="term" value="C:cytoplasm"/>
    <property type="evidence" value="ECO:0007669"/>
    <property type="project" value="UniProtKB-SubCell"/>
</dbReference>
<dbReference type="GO" id="GO:0003676">
    <property type="term" value="F:nucleic acid binding"/>
    <property type="evidence" value="ECO:0007669"/>
    <property type="project" value="InterPro"/>
</dbReference>
<dbReference type="GO" id="GO:0016430">
    <property type="term" value="F:tRNA (adenine-N6)-methyltransferase activity"/>
    <property type="evidence" value="ECO:0007669"/>
    <property type="project" value="UniProtKB-UniRule"/>
</dbReference>
<dbReference type="GO" id="GO:0032259">
    <property type="term" value="P:methylation"/>
    <property type="evidence" value="ECO:0007669"/>
    <property type="project" value="UniProtKB-KW"/>
</dbReference>
<dbReference type="GO" id="GO:0008033">
    <property type="term" value="P:tRNA processing"/>
    <property type="evidence" value="ECO:0007669"/>
    <property type="project" value="UniProtKB-UniRule"/>
</dbReference>
<dbReference type="CDD" id="cd02440">
    <property type="entry name" value="AdoMet_MTases"/>
    <property type="match status" value="1"/>
</dbReference>
<dbReference type="Gene3D" id="3.40.50.150">
    <property type="entry name" value="Vaccinia Virus protein VP39"/>
    <property type="match status" value="1"/>
</dbReference>
<dbReference type="HAMAP" id="MF_01872">
    <property type="entry name" value="tRNA_methyltr_YfiC"/>
    <property type="match status" value="1"/>
</dbReference>
<dbReference type="InterPro" id="IPR002052">
    <property type="entry name" value="DNA_methylase_N6_adenine_CS"/>
</dbReference>
<dbReference type="InterPro" id="IPR029063">
    <property type="entry name" value="SAM-dependent_MTases_sf"/>
</dbReference>
<dbReference type="InterPro" id="IPR007848">
    <property type="entry name" value="Small_mtfrase_dom"/>
</dbReference>
<dbReference type="InterPro" id="IPR050210">
    <property type="entry name" value="tRNA_Adenine-N(6)_MTase"/>
</dbReference>
<dbReference type="InterPro" id="IPR022882">
    <property type="entry name" value="tRNA_adenine-N6_MeTrfase"/>
</dbReference>
<dbReference type="NCBIfam" id="NF047853">
    <property type="entry name" value="tRm6a37MtseTrmN"/>
    <property type="match status" value="1"/>
</dbReference>
<dbReference type="PANTHER" id="PTHR47739">
    <property type="entry name" value="TRNA1(VAL) (ADENINE(37)-N6)-METHYLTRANSFERASE"/>
    <property type="match status" value="1"/>
</dbReference>
<dbReference type="PANTHER" id="PTHR47739:SF1">
    <property type="entry name" value="TRNA1(VAL) (ADENINE(37)-N6)-METHYLTRANSFERASE"/>
    <property type="match status" value="1"/>
</dbReference>
<dbReference type="Pfam" id="PF05175">
    <property type="entry name" value="MTS"/>
    <property type="match status" value="1"/>
</dbReference>
<dbReference type="SUPFAM" id="SSF53335">
    <property type="entry name" value="S-adenosyl-L-methionine-dependent methyltransferases"/>
    <property type="match status" value="1"/>
</dbReference>
<dbReference type="PROSITE" id="PS00092">
    <property type="entry name" value="N6_MTASE"/>
    <property type="match status" value="1"/>
</dbReference>
<proteinExistence type="inferred from homology"/>
<name>TRMN6_ENT38</name>
<organism>
    <name type="scientific">Enterobacter sp. (strain 638)</name>
    <dbReference type="NCBI Taxonomy" id="399742"/>
    <lineage>
        <taxon>Bacteria</taxon>
        <taxon>Pseudomonadati</taxon>
        <taxon>Pseudomonadota</taxon>
        <taxon>Gammaproteobacteria</taxon>
        <taxon>Enterobacterales</taxon>
        <taxon>Enterobacteriaceae</taxon>
        <taxon>Enterobacter</taxon>
    </lineage>
</organism>
<gene>
    <name type="ordered locus">Ent638_3062</name>
</gene>
<feature type="chain" id="PRO_0000387352" description="tRNA1(Val) (adenine(37)-N6)-methyltransferase">
    <location>
        <begin position="1"/>
        <end position="245"/>
    </location>
</feature>
<accession>A4WDE6</accession>
<protein>
    <recommendedName>
        <fullName evidence="1">tRNA1(Val) (adenine(37)-N6)-methyltransferase</fullName>
        <ecNumber evidence="1">2.1.1.223</ecNumber>
    </recommendedName>
    <alternativeName>
        <fullName evidence="1">tRNA m6A37 methyltransferase</fullName>
    </alternativeName>
</protein>
<comment type="function">
    <text evidence="1">Specifically methylates the adenine in position 37 of tRNA(1)(Val) (anticodon cmo5UAC).</text>
</comment>
<comment type="catalytic activity">
    <reaction evidence="1">
        <text>adenosine(37) in tRNA1(Val) + S-adenosyl-L-methionine = N(6)-methyladenosine(37) in tRNA1(Val) + S-adenosyl-L-homocysteine + H(+)</text>
        <dbReference type="Rhea" id="RHEA:43160"/>
        <dbReference type="Rhea" id="RHEA-COMP:10369"/>
        <dbReference type="Rhea" id="RHEA-COMP:10370"/>
        <dbReference type="ChEBI" id="CHEBI:15378"/>
        <dbReference type="ChEBI" id="CHEBI:57856"/>
        <dbReference type="ChEBI" id="CHEBI:59789"/>
        <dbReference type="ChEBI" id="CHEBI:74411"/>
        <dbReference type="ChEBI" id="CHEBI:74449"/>
        <dbReference type="EC" id="2.1.1.223"/>
    </reaction>
</comment>
<comment type="subcellular location">
    <subcellularLocation>
        <location evidence="1">Cytoplasm</location>
    </subcellularLocation>
</comment>
<comment type="similarity">
    <text evidence="1">Belongs to the methyltransferase superfamily. tRNA (adenine-N(6)-)-methyltransferase family.</text>
</comment>
<keyword id="KW-0963">Cytoplasm</keyword>
<keyword id="KW-0489">Methyltransferase</keyword>
<keyword id="KW-0949">S-adenosyl-L-methionine</keyword>
<keyword id="KW-0808">Transferase</keyword>
<keyword id="KW-0819">tRNA processing</keyword>